<organism>
    <name type="scientific">Bombina maxima</name>
    <name type="common">Giant fire-bellied toad</name>
    <name type="synonym">Chinese red belly toad</name>
    <dbReference type="NCBI Taxonomy" id="161274"/>
    <lineage>
        <taxon>Eukaryota</taxon>
        <taxon>Metazoa</taxon>
        <taxon>Chordata</taxon>
        <taxon>Craniata</taxon>
        <taxon>Vertebrata</taxon>
        <taxon>Euteleostomi</taxon>
        <taxon>Amphibia</taxon>
        <taxon>Batrachia</taxon>
        <taxon>Anura</taxon>
        <taxon>Bombinatoridae</taxon>
        <taxon>Bombina</taxon>
    </lineage>
</organism>
<accession>Q58T40</accession>
<name>M3H16_BOMMX</name>
<evidence type="ECO:0000250" key="1"/>
<evidence type="ECO:0000255" key="2"/>
<evidence type="ECO:0000269" key="3">
    <source>
    </source>
</evidence>
<evidence type="ECO:0000269" key="4">
    <source>
    </source>
</evidence>
<evidence type="ECO:0000305" key="5"/>
<feature type="signal peptide" evidence="2">
    <location>
        <begin position="1"/>
        <end position="18"/>
    </location>
</feature>
<feature type="propeptide" id="PRO_0000003116" evidence="3">
    <location>
        <begin position="19"/>
        <end position="43"/>
    </location>
</feature>
<feature type="peptide" id="PRO_0000003117" description="Maximin-3">
    <location>
        <begin position="44"/>
        <end position="70"/>
    </location>
</feature>
<feature type="propeptide" id="PRO_0000003118" evidence="1">
    <location>
        <begin position="73"/>
        <end position="122"/>
    </location>
</feature>
<feature type="peptide" id="PRO_0000003119" description="Maximin-H16">
    <location>
        <begin position="124"/>
        <end position="143"/>
    </location>
</feature>
<feature type="modified residue" description="Isoleucine amide" evidence="4">
    <location>
        <position position="143"/>
    </location>
</feature>
<proteinExistence type="evidence at protein level"/>
<comment type="function">
    <text evidence="3">Maximin-3 shows antibacterial activity against both Gram-positive and Gram-negative bacteria. It also shows antimicrobial activity against the fungus C.albicans, but not against A.flavus nor P.uticale. It has little hemolytic activity. It possess a significant cytotoxicity against tumor cell lines. It possess a significant anti-HIV activity. It shows high spermicidal activity.</text>
</comment>
<comment type="function">
    <text evidence="1">Maximin-H16 shows antimicrobial activity against bacteria and against the fungus C.albicans. Shows strong hemolytic activity (By similarity).</text>
</comment>
<comment type="subcellular location">
    <subcellularLocation>
        <location>Secreted</location>
    </subcellularLocation>
</comment>
<comment type="tissue specificity">
    <text>Expressed by the skin glands.</text>
</comment>
<comment type="mass spectrometry" mass="2698.0" method="FAB" evidence="3">
    <molecule>Maximin-3</molecule>
</comment>
<comment type="similarity">
    <text evidence="5">Belongs to the bombinin family.</text>
</comment>
<protein>
    <recommendedName>
        <fullName>Maximins 3/H16</fullName>
    </recommendedName>
    <component>
        <recommendedName>
            <fullName>Maximin-3</fullName>
        </recommendedName>
    </component>
    <component>
        <recommendedName>
            <fullName>Maximin-H16</fullName>
        </recommendedName>
    </component>
</protein>
<sequence length="144" mass="16080">MNFKYIVAVSFLIASAYARSVQNDEQSLSQRDVLEEESLREIRGIGGKILSGLKTALKGAAKELASTYLHRKRTAEEHEVMKRLEAVMRDLDSLDYPEEASERETRGFNQDEIANLFTKKEKRILGPVLSLVGNALGGLIKKIG</sequence>
<reference key="1">
    <citation type="journal article" date="2005" name="Eur. J. Immunol.">
        <title>Variety of antimicrobial peptides in the Bombina maxima toad and evidence of their rapid diversification.</title>
        <authorList>
            <person name="Lee W.-H."/>
            <person name="Li Y."/>
            <person name="Lai R."/>
            <person name="Li S."/>
            <person name="Zhang Y."/>
            <person name="Wang W."/>
        </authorList>
    </citation>
    <scope>NUCLEOTIDE SEQUENCE [MRNA]</scope>
    <scope>PROTEIN SEQUENCE OF 44-70 AND 124-143</scope>
    <scope>AMIDATION AT ILE-143</scope>
    <scope>MASS SPECTROMETRY</scope>
    <source>
        <tissue>Skin</tissue>
    </source>
</reference>
<reference key="2">
    <citation type="journal article" date="2002" name="Peptides">
        <title>Antimicrobial peptides from skin secretions of Chinese red belly toad Bombina maxima.</title>
        <authorList>
            <person name="Lai R."/>
            <person name="Zheng Y.-T."/>
            <person name="Shen J.-H."/>
            <person name="Liu G.-J."/>
            <person name="Liu H."/>
            <person name="Lee W.-H."/>
            <person name="Tang S.-Z."/>
            <person name="Zhang Y."/>
        </authorList>
    </citation>
    <scope>PROTEIN SEQUENCE OF 44-70</scope>
    <scope>MASS SPECTROMETRY</scope>
    <scope>FUNCTION OF MAXIMIN-3</scope>
</reference>
<keyword id="KW-0027">Amidation</keyword>
<keyword id="KW-0878">Amphibian defense peptide</keyword>
<keyword id="KW-0044">Antibiotic</keyword>
<keyword id="KW-0929">Antimicrobial</keyword>
<keyword id="KW-0165">Cleavage on pair of basic residues</keyword>
<keyword id="KW-0204">Cytolysis</keyword>
<keyword id="KW-0903">Direct protein sequencing</keyword>
<keyword id="KW-0295">Fungicide</keyword>
<keyword id="KW-0354">Hemolysis</keyword>
<keyword id="KW-0964">Secreted</keyword>
<keyword id="KW-0732">Signal</keyword>
<dbReference type="EMBL" id="AY849020">
    <property type="protein sequence ID" value="AAX50241.1"/>
    <property type="molecule type" value="mRNA"/>
</dbReference>
<dbReference type="SMR" id="Q58T40"/>
<dbReference type="GO" id="GO:0005576">
    <property type="term" value="C:extracellular region"/>
    <property type="evidence" value="ECO:0007669"/>
    <property type="project" value="UniProtKB-SubCell"/>
</dbReference>
<dbReference type="GO" id="GO:0042742">
    <property type="term" value="P:defense response to bacterium"/>
    <property type="evidence" value="ECO:0007669"/>
    <property type="project" value="UniProtKB-KW"/>
</dbReference>
<dbReference type="GO" id="GO:0050832">
    <property type="term" value="P:defense response to fungus"/>
    <property type="evidence" value="ECO:0007669"/>
    <property type="project" value="UniProtKB-KW"/>
</dbReference>
<dbReference type="GO" id="GO:0031640">
    <property type="term" value="P:killing of cells of another organism"/>
    <property type="evidence" value="ECO:0007669"/>
    <property type="project" value="UniProtKB-KW"/>
</dbReference>
<dbReference type="InterPro" id="IPR007962">
    <property type="entry name" value="Bombinin"/>
</dbReference>
<dbReference type="Pfam" id="PF05298">
    <property type="entry name" value="Bombinin"/>
    <property type="match status" value="1"/>
</dbReference>